<comment type="function">
    <text evidence="1">NDH-1 shuttles electrons from NADH, via FMN and iron-sulfur (Fe-S) centers, to quinones in the respiratory chain. The immediate electron acceptor for the enzyme in this species is believed to be ubiquinone. Couples the redox reaction to proton translocation (for every two electrons transferred, four hydrogen ions are translocated across the cytoplasmic membrane), and thus conserves the redox energy in a proton gradient. This subunit may bind ubiquinone.</text>
</comment>
<comment type="catalytic activity">
    <reaction evidence="1">
        <text>a quinone + NADH + 5 H(+)(in) = a quinol + NAD(+) + 4 H(+)(out)</text>
        <dbReference type="Rhea" id="RHEA:57888"/>
        <dbReference type="ChEBI" id="CHEBI:15378"/>
        <dbReference type="ChEBI" id="CHEBI:24646"/>
        <dbReference type="ChEBI" id="CHEBI:57540"/>
        <dbReference type="ChEBI" id="CHEBI:57945"/>
        <dbReference type="ChEBI" id="CHEBI:132124"/>
    </reaction>
</comment>
<comment type="subunit">
    <text evidence="1">NDH-1 is composed of 14 different subunits. Subunits NuoA, H, J, K, L, M, N constitute the membrane sector of the complex.</text>
</comment>
<comment type="subcellular location">
    <subcellularLocation>
        <location evidence="1">Cell inner membrane</location>
        <topology evidence="1">Multi-pass membrane protein</topology>
    </subcellularLocation>
</comment>
<comment type="similarity">
    <text evidence="1">Belongs to the complex I subunit 1 family.</text>
</comment>
<accession>Q9K1B4</accession>
<evidence type="ECO:0000255" key="1">
    <source>
        <dbReference type="HAMAP-Rule" id="MF_01350"/>
    </source>
</evidence>
<protein>
    <recommendedName>
        <fullName evidence="1">NADH-quinone oxidoreductase subunit H</fullName>
        <ecNumber evidence="1">7.1.1.-</ecNumber>
    </recommendedName>
    <alternativeName>
        <fullName evidence="1">NADH dehydrogenase I subunit H</fullName>
    </alternativeName>
    <alternativeName>
        <fullName evidence="1">NDH-1 subunit H</fullName>
    </alternativeName>
</protein>
<gene>
    <name evidence="1" type="primary">nuoH</name>
    <name type="ordered locus">NMB0250</name>
</gene>
<keyword id="KW-0997">Cell inner membrane</keyword>
<keyword id="KW-1003">Cell membrane</keyword>
<keyword id="KW-0472">Membrane</keyword>
<keyword id="KW-0520">NAD</keyword>
<keyword id="KW-0874">Quinone</keyword>
<keyword id="KW-1185">Reference proteome</keyword>
<keyword id="KW-1278">Translocase</keyword>
<keyword id="KW-0812">Transmembrane</keyword>
<keyword id="KW-1133">Transmembrane helix</keyword>
<keyword id="KW-0830">Ubiquinone</keyword>
<organism>
    <name type="scientific">Neisseria meningitidis serogroup B (strain ATCC BAA-335 / MC58)</name>
    <dbReference type="NCBI Taxonomy" id="122586"/>
    <lineage>
        <taxon>Bacteria</taxon>
        <taxon>Pseudomonadati</taxon>
        <taxon>Pseudomonadota</taxon>
        <taxon>Betaproteobacteria</taxon>
        <taxon>Neisseriales</taxon>
        <taxon>Neisseriaceae</taxon>
        <taxon>Neisseria</taxon>
    </lineage>
</organism>
<sequence>MQEWFQNLFAATLGLGDLGITVGLVVSVIVKIVIILIPLILTVAYLTYFERKVIGFMQLRVGPNVTGPWGLIQPFADVFKLLFKEVTRPKLSNKALFYIGPIMSLAPSFAAWAVIPFNEEWVLTNINIGLLYILMITSLSVYGVIIAGWASNSKYSFLGAMRASAQSISYEIAMSAALVCVVMVSGSMNFSDIVAAQAKGIAGGSVFSWNWLPLFPIFIVYLISAVAETNRAPFDVAEGESEIVAGHHVEYSGFAFALFFLAEYIFMILIAALTSLMFLGGWLSPFPQSWGIVGTPSAFWMFAKMAAVLYWYLWIRATFPRYRYDQIMRLGWKVLIPIGFAYIVILGVWMISPLNLWK</sequence>
<reference key="1">
    <citation type="journal article" date="2000" name="Science">
        <title>Complete genome sequence of Neisseria meningitidis serogroup B strain MC58.</title>
        <authorList>
            <person name="Tettelin H."/>
            <person name="Saunders N.J."/>
            <person name="Heidelberg J.F."/>
            <person name="Jeffries A.C."/>
            <person name="Nelson K.E."/>
            <person name="Eisen J.A."/>
            <person name="Ketchum K.A."/>
            <person name="Hood D.W."/>
            <person name="Peden J.F."/>
            <person name="Dodson R.J."/>
            <person name="Nelson W.C."/>
            <person name="Gwinn M.L."/>
            <person name="DeBoy R.T."/>
            <person name="Peterson J.D."/>
            <person name="Hickey E.K."/>
            <person name="Haft D.H."/>
            <person name="Salzberg S.L."/>
            <person name="White O."/>
            <person name="Fleischmann R.D."/>
            <person name="Dougherty B.A."/>
            <person name="Mason T.M."/>
            <person name="Ciecko A."/>
            <person name="Parksey D.S."/>
            <person name="Blair E."/>
            <person name="Cittone H."/>
            <person name="Clark E.B."/>
            <person name="Cotton M.D."/>
            <person name="Utterback T.R."/>
            <person name="Khouri H.M."/>
            <person name="Qin H."/>
            <person name="Vamathevan J.J."/>
            <person name="Gill J."/>
            <person name="Scarlato V."/>
            <person name="Masignani V."/>
            <person name="Pizza M."/>
            <person name="Grandi G."/>
            <person name="Sun L."/>
            <person name="Smith H.O."/>
            <person name="Fraser C.M."/>
            <person name="Moxon E.R."/>
            <person name="Rappuoli R."/>
            <person name="Venter J.C."/>
        </authorList>
    </citation>
    <scope>NUCLEOTIDE SEQUENCE [LARGE SCALE GENOMIC DNA]</scope>
    <source>
        <strain>ATCC BAA-335 / MC58</strain>
    </source>
</reference>
<proteinExistence type="inferred from homology"/>
<feature type="chain" id="PRO_0000240088" description="NADH-quinone oxidoreductase subunit H">
    <location>
        <begin position="1"/>
        <end position="358"/>
    </location>
</feature>
<feature type="transmembrane region" description="Helical" evidence="1">
    <location>
        <begin position="20"/>
        <end position="40"/>
    </location>
</feature>
<feature type="transmembrane region" description="Helical" evidence="1">
    <location>
        <begin position="95"/>
        <end position="115"/>
    </location>
</feature>
<feature type="transmembrane region" description="Helical" evidence="1">
    <location>
        <begin position="128"/>
        <end position="148"/>
    </location>
</feature>
<feature type="transmembrane region" description="Helical" evidence="1">
    <location>
        <begin position="168"/>
        <end position="188"/>
    </location>
</feature>
<feature type="transmembrane region" description="Helical" evidence="1">
    <location>
        <begin position="206"/>
        <end position="226"/>
    </location>
</feature>
<feature type="transmembrane region" description="Helical" evidence="1">
    <location>
        <begin position="253"/>
        <end position="273"/>
    </location>
</feature>
<feature type="transmembrane region" description="Helical" evidence="1">
    <location>
        <begin position="295"/>
        <end position="315"/>
    </location>
</feature>
<feature type="transmembrane region" description="Helical" evidence="1">
    <location>
        <begin position="334"/>
        <end position="354"/>
    </location>
</feature>
<name>NUOH_NEIMB</name>
<dbReference type="EC" id="7.1.1.-" evidence="1"/>
<dbReference type="EMBL" id="AE002098">
    <property type="protein sequence ID" value="AAF40704.1"/>
    <property type="molecule type" value="Genomic_DNA"/>
</dbReference>
<dbReference type="PIR" id="E81219">
    <property type="entry name" value="E81219"/>
</dbReference>
<dbReference type="RefSeq" id="NP_273306.1">
    <property type="nucleotide sequence ID" value="NC_003112.2"/>
</dbReference>
<dbReference type="RefSeq" id="WP_002221910.1">
    <property type="nucleotide sequence ID" value="NC_003112.2"/>
</dbReference>
<dbReference type="SMR" id="Q9K1B4"/>
<dbReference type="FunCoup" id="Q9K1B4">
    <property type="interactions" value="147"/>
</dbReference>
<dbReference type="STRING" id="122586.NMB0250"/>
<dbReference type="PaxDb" id="122586-NMB0250"/>
<dbReference type="KEGG" id="nme:NMB0250"/>
<dbReference type="PATRIC" id="fig|122586.8.peg.313"/>
<dbReference type="HOGENOM" id="CLU_015134_0_1_4"/>
<dbReference type="InParanoid" id="Q9K1B4"/>
<dbReference type="OrthoDB" id="9803734at2"/>
<dbReference type="Proteomes" id="UP000000425">
    <property type="component" value="Chromosome"/>
</dbReference>
<dbReference type="GO" id="GO:0005886">
    <property type="term" value="C:plasma membrane"/>
    <property type="evidence" value="ECO:0007669"/>
    <property type="project" value="UniProtKB-SubCell"/>
</dbReference>
<dbReference type="GO" id="GO:0045271">
    <property type="term" value="C:respiratory chain complex I"/>
    <property type="evidence" value="ECO:0000318"/>
    <property type="project" value="GO_Central"/>
</dbReference>
<dbReference type="GO" id="GO:0016655">
    <property type="term" value="F:oxidoreductase activity, acting on NAD(P)H, quinone or similar compound as acceptor"/>
    <property type="evidence" value="ECO:0007669"/>
    <property type="project" value="UniProtKB-UniRule"/>
</dbReference>
<dbReference type="GO" id="GO:0048038">
    <property type="term" value="F:quinone binding"/>
    <property type="evidence" value="ECO:0007669"/>
    <property type="project" value="UniProtKB-KW"/>
</dbReference>
<dbReference type="GO" id="GO:0009060">
    <property type="term" value="P:aerobic respiration"/>
    <property type="evidence" value="ECO:0000318"/>
    <property type="project" value="GO_Central"/>
</dbReference>
<dbReference type="HAMAP" id="MF_01350">
    <property type="entry name" value="NDH1_NuoH"/>
    <property type="match status" value="1"/>
</dbReference>
<dbReference type="InterPro" id="IPR001694">
    <property type="entry name" value="NADH_UbQ_OxRdtase_su1/FPO"/>
</dbReference>
<dbReference type="InterPro" id="IPR018086">
    <property type="entry name" value="NADH_UbQ_OxRdtase_su1_CS"/>
</dbReference>
<dbReference type="NCBIfam" id="NF004741">
    <property type="entry name" value="PRK06076.1-2"/>
    <property type="match status" value="1"/>
</dbReference>
<dbReference type="PANTHER" id="PTHR11432">
    <property type="entry name" value="NADH DEHYDROGENASE SUBUNIT 1"/>
    <property type="match status" value="1"/>
</dbReference>
<dbReference type="PANTHER" id="PTHR11432:SF3">
    <property type="entry name" value="NADH-UBIQUINONE OXIDOREDUCTASE CHAIN 1"/>
    <property type="match status" value="1"/>
</dbReference>
<dbReference type="Pfam" id="PF00146">
    <property type="entry name" value="NADHdh"/>
    <property type="match status" value="1"/>
</dbReference>
<dbReference type="PROSITE" id="PS00668">
    <property type="entry name" value="COMPLEX1_ND1_2"/>
    <property type="match status" value="1"/>
</dbReference>